<sequence>MTTFTAKNETVQRDWYLVDAEGKTLGRLATELARRLLGKTKPVYTPHVDTGDYLVVINAEKVVVTGKKLTDKYYHRFTGYVGNLKSESLGQALQRHPERVLEIAVKGMLPKGPLGRAMYRKLKVYTGSKHPHTAQQPQVLDI</sequence>
<protein>
    <recommendedName>
        <fullName evidence="1">Large ribosomal subunit protein uL13</fullName>
    </recommendedName>
    <alternativeName>
        <fullName evidence="2">50S ribosomal protein L13</fullName>
    </alternativeName>
</protein>
<feature type="chain" id="PRO_1000144200" description="Large ribosomal subunit protein uL13">
    <location>
        <begin position="1"/>
        <end position="142"/>
    </location>
</feature>
<proteinExistence type="inferred from homology"/>
<evidence type="ECO:0000255" key="1">
    <source>
        <dbReference type="HAMAP-Rule" id="MF_01366"/>
    </source>
</evidence>
<evidence type="ECO:0000305" key="2"/>
<accession>B2IAE8</accession>
<organism>
    <name type="scientific">Xylella fastidiosa (strain M23)</name>
    <dbReference type="NCBI Taxonomy" id="405441"/>
    <lineage>
        <taxon>Bacteria</taxon>
        <taxon>Pseudomonadati</taxon>
        <taxon>Pseudomonadota</taxon>
        <taxon>Gammaproteobacteria</taxon>
        <taxon>Lysobacterales</taxon>
        <taxon>Lysobacteraceae</taxon>
        <taxon>Xylella</taxon>
    </lineage>
</organism>
<reference key="1">
    <citation type="journal article" date="2010" name="J. Bacteriol.">
        <title>Whole genome sequences of two Xylella fastidiosa strains (M12 and M23) causing almond leaf scorch disease in California.</title>
        <authorList>
            <person name="Chen J."/>
            <person name="Xie G."/>
            <person name="Han S."/>
            <person name="Chertkov O."/>
            <person name="Sims D."/>
            <person name="Civerolo E.L."/>
        </authorList>
    </citation>
    <scope>NUCLEOTIDE SEQUENCE [LARGE SCALE GENOMIC DNA]</scope>
    <source>
        <strain>M23</strain>
    </source>
</reference>
<dbReference type="EMBL" id="CP001011">
    <property type="protein sequence ID" value="ACB92228.1"/>
    <property type="molecule type" value="Genomic_DNA"/>
</dbReference>
<dbReference type="RefSeq" id="WP_004083669.1">
    <property type="nucleotide sequence ID" value="NC_010577.1"/>
</dbReference>
<dbReference type="SMR" id="B2IAE8"/>
<dbReference type="GeneID" id="93904531"/>
<dbReference type="KEGG" id="xfn:XfasM23_0789"/>
<dbReference type="HOGENOM" id="CLU_082184_2_2_6"/>
<dbReference type="Proteomes" id="UP000001698">
    <property type="component" value="Chromosome"/>
</dbReference>
<dbReference type="GO" id="GO:0022625">
    <property type="term" value="C:cytosolic large ribosomal subunit"/>
    <property type="evidence" value="ECO:0007669"/>
    <property type="project" value="TreeGrafter"/>
</dbReference>
<dbReference type="GO" id="GO:0003729">
    <property type="term" value="F:mRNA binding"/>
    <property type="evidence" value="ECO:0007669"/>
    <property type="project" value="TreeGrafter"/>
</dbReference>
<dbReference type="GO" id="GO:0003735">
    <property type="term" value="F:structural constituent of ribosome"/>
    <property type="evidence" value="ECO:0007669"/>
    <property type="project" value="InterPro"/>
</dbReference>
<dbReference type="GO" id="GO:0017148">
    <property type="term" value="P:negative regulation of translation"/>
    <property type="evidence" value="ECO:0007669"/>
    <property type="project" value="TreeGrafter"/>
</dbReference>
<dbReference type="GO" id="GO:0006412">
    <property type="term" value="P:translation"/>
    <property type="evidence" value="ECO:0007669"/>
    <property type="project" value="UniProtKB-UniRule"/>
</dbReference>
<dbReference type="CDD" id="cd00392">
    <property type="entry name" value="Ribosomal_L13"/>
    <property type="match status" value="1"/>
</dbReference>
<dbReference type="FunFam" id="3.90.1180.10:FF:000001">
    <property type="entry name" value="50S ribosomal protein L13"/>
    <property type="match status" value="1"/>
</dbReference>
<dbReference type="Gene3D" id="3.90.1180.10">
    <property type="entry name" value="Ribosomal protein L13"/>
    <property type="match status" value="1"/>
</dbReference>
<dbReference type="HAMAP" id="MF_01366">
    <property type="entry name" value="Ribosomal_uL13"/>
    <property type="match status" value="1"/>
</dbReference>
<dbReference type="InterPro" id="IPR005822">
    <property type="entry name" value="Ribosomal_uL13"/>
</dbReference>
<dbReference type="InterPro" id="IPR005823">
    <property type="entry name" value="Ribosomal_uL13_bac-type"/>
</dbReference>
<dbReference type="InterPro" id="IPR023563">
    <property type="entry name" value="Ribosomal_uL13_CS"/>
</dbReference>
<dbReference type="InterPro" id="IPR036899">
    <property type="entry name" value="Ribosomal_uL13_sf"/>
</dbReference>
<dbReference type="NCBIfam" id="TIGR01066">
    <property type="entry name" value="rplM_bact"/>
    <property type="match status" value="1"/>
</dbReference>
<dbReference type="PANTHER" id="PTHR11545:SF2">
    <property type="entry name" value="LARGE RIBOSOMAL SUBUNIT PROTEIN UL13M"/>
    <property type="match status" value="1"/>
</dbReference>
<dbReference type="PANTHER" id="PTHR11545">
    <property type="entry name" value="RIBOSOMAL PROTEIN L13"/>
    <property type="match status" value="1"/>
</dbReference>
<dbReference type="Pfam" id="PF00572">
    <property type="entry name" value="Ribosomal_L13"/>
    <property type="match status" value="1"/>
</dbReference>
<dbReference type="PIRSF" id="PIRSF002181">
    <property type="entry name" value="Ribosomal_L13"/>
    <property type="match status" value="1"/>
</dbReference>
<dbReference type="SUPFAM" id="SSF52161">
    <property type="entry name" value="Ribosomal protein L13"/>
    <property type="match status" value="1"/>
</dbReference>
<dbReference type="PROSITE" id="PS00783">
    <property type="entry name" value="RIBOSOMAL_L13"/>
    <property type="match status" value="1"/>
</dbReference>
<comment type="function">
    <text evidence="1">This protein is one of the early assembly proteins of the 50S ribosomal subunit, although it is not seen to bind rRNA by itself. It is important during the early stages of 50S assembly.</text>
</comment>
<comment type="subunit">
    <text evidence="1">Part of the 50S ribosomal subunit.</text>
</comment>
<comment type="similarity">
    <text evidence="1">Belongs to the universal ribosomal protein uL13 family.</text>
</comment>
<gene>
    <name evidence="1" type="primary">rplM</name>
    <name type="ordered locus">XfasM23_0789</name>
</gene>
<keyword id="KW-0687">Ribonucleoprotein</keyword>
<keyword id="KW-0689">Ribosomal protein</keyword>
<name>RL13_XYLF2</name>